<comment type="function">
    <text evidence="2 7">Part of the PpsABCDE complex involved in the biosynthesis of the lipid core common to phthiocerols and phenolphthiocerols by successive additions of malonyl-CoA or methylmalonyl-CoA extender units (PubMed:9201977). PpsA can accept as substrate the activated forms of either icosanoyl (C20), docosanoyl (C22) or lignoceroyl (C24) groups from FadD26, or a (4-hydroxyphenyl)-C17 or (4-hydroxyphenyl)-C19 fatty acyl from FadD29 (By similarity). PpsA initiates the biosynthesis and extends its substrate using a malonyl-CoA extender unit. The PpsB and PpsC proteins add the second and third malonyl-CoA extender units. PpsD adds an (R)-methylmalonyl unit and PpsE adds a second (R)-methylmalonyl unit. The incorporation of the methylmalonyl units results in formation of two branched methyl groups in the elongated product (By similarity).</text>
</comment>
<comment type="catalytic activity">
    <reaction evidence="2">
        <text>icosanoyl-[(phenol)carboxyphthiodiolenone synthase] + 2 (S)-methylmalonyl-CoA + 3 malonyl-CoA + 5 NADPH + 10 H(+) = C32-carboxyphthiodiolenone-[(phenol)carboxyphthiodiolenone synthase] + 5 CO2 + 5 NADP(+) + 5 CoA + 2 H2O</text>
        <dbReference type="Rhea" id="RHEA:57748"/>
        <dbReference type="Rhea" id="RHEA-COMP:14985"/>
        <dbReference type="Rhea" id="RHEA-COMP:14986"/>
        <dbReference type="ChEBI" id="CHEBI:15377"/>
        <dbReference type="ChEBI" id="CHEBI:15378"/>
        <dbReference type="ChEBI" id="CHEBI:16526"/>
        <dbReference type="ChEBI" id="CHEBI:57287"/>
        <dbReference type="ChEBI" id="CHEBI:57327"/>
        <dbReference type="ChEBI" id="CHEBI:57384"/>
        <dbReference type="ChEBI" id="CHEBI:57783"/>
        <dbReference type="ChEBI" id="CHEBI:58349"/>
        <dbReference type="ChEBI" id="CHEBI:87848"/>
        <dbReference type="ChEBI" id="CHEBI:142236"/>
        <dbReference type="EC" id="2.3.1.292"/>
    </reaction>
</comment>
<comment type="catalytic activity">
    <reaction evidence="2">
        <text>docosanoyl-[(phenol)carboxyphthiodiolenone synthase] + 2 (S)-methylmalonyl-CoA + 3 malonyl-CoA + 5 NADPH + 10 H(+) = C34-carboxyphthiodiolenone-[(phenol)carboxyphthiodiolenone synthase] + 5 CO2 + 5 NADP(+) + 5 CoA + 2 H2O</text>
        <dbReference type="Rhea" id="RHEA:57752"/>
        <dbReference type="Rhea" id="RHEA-COMP:14987"/>
        <dbReference type="Rhea" id="RHEA-COMP:14988"/>
        <dbReference type="ChEBI" id="CHEBI:15377"/>
        <dbReference type="ChEBI" id="CHEBI:15378"/>
        <dbReference type="ChEBI" id="CHEBI:16526"/>
        <dbReference type="ChEBI" id="CHEBI:57287"/>
        <dbReference type="ChEBI" id="CHEBI:57327"/>
        <dbReference type="ChEBI" id="CHEBI:57384"/>
        <dbReference type="ChEBI" id="CHEBI:57783"/>
        <dbReference type="ChEBI" id="CHEBI:58349"/>
        <dbReference type="ChEBI" id="CHEBI:142237"/>
        <dbReference type="ChEBI" id="CHEBI:142238"/>
        <dbReference type="EC" id="2.3.1.292"/>
    </reaction>
</comment>
<comment type="catalytic activity">
    <reaction evidence="2">
        <text>17-(4-hydroxyphenyl)heptadecanoyl-[(phenol)carboxyphthiodiolenone synthase] + 2 (S)-methylmalonyl-CoA + 3 malonyl-CoA + 5 NADPH + 10 H(+) = C35-(phenol)carboxyphthiodiolenone-[(phenol)carboxyphthiodiolenone synthase] + 5 CO2 + 5 NADP(+) + 5 CoA + 2 H2O</text>
        <dbReference type="Rhea" id="RHEA:57756"/>
        <dbReference type="Rhea" id="RHEA-COMP:14272"/>
        <dbReference type="Rhea" id="RHEA-COMP:14989"/>
        <dbReference type="ChEBI" id="CHEBI:15377"/>
        <dbReference type="ChEBI" id="CHEBI:15378"/>
        <dbReference type="ChEBI" id="CHEBI:16526"/>
        <dbReference type="ChEBI" id="CHEBI:57287"/>
        <dbReference type="ChEBI" id="CHEBI:57327"/>
        <dbReference type="ChEBI" id="CHEBI:57384"/>
        <dbReference type="ChEBI" id="CHEBI:57783"/>
        <dbReference type="ChEBI" id="CHEBI:58349"/>
        <dbReference type="ChEBI" id="CHEBI:133300"/>
        <dbReference type="ChEBI" id="CHEBI:142259"/>
        <dbReference type="EC" id="2.3.1.292"/>
    </reaction>
</comment>
<comment type="catalytic activity">
    <reaction evidence="2">
        <text>19-(4-hydroxyphenyl)nonadecanoyl-[(phenol)carboxyphthiodiolenone synthase] + 2 (S)-methylmalonyl-CoA + 3 malonyl-CoA + 5 NADPH + 10 H(+) = C37-(phenol)carboxyphthiodiolenone-[(phenol)carboxyphthiodiolenone synthase] + 5 CO2 + 5 NADP(+) + 5 CoA + 2 H2O</text>
        <dbReference type="Rhea" id="RHEA:57760"/>
        <dbReference type="Rhea" id="RHEA-COMP:14273"/>
        <dbReference type="Rhea" id="RHEA-COMP:14990"/>
        <dbReference type="ChEBI" id="CHEBI:15377"/>
        <dbReference type="ChEBI" id="CHEBI:15378"/>
        <dbReference type="ChEBI" id="CHEBI:16526"/>
        <dbReference type="ChEBI" id="CHEBI:57287"/>
        <dbReference type="ChEBI" id="CHEBI:57327"/>
        <dbReference type="ChEBI" id="CHEBI:57384"/>
        <dbReference type="ChEBI" id="CHEBI:57783"/>
        <dbReference type="ChEBI" id="CHEBI:58349"/>
        <dbReference type="ChEBI" id="CHEBI:133301"/>
        <dbReference type="ChEBI" id="CHEBI:142260"/>
        <dbReference type="EC" id="2.3.1.292"/>
    </reaction>
</comment>
<comment type="cofactor">
    <cofactor evidence="2">
        <name>NADP(+)</name>
        <dbReference type="ChEBI" id="CHEBI:58349"/>
    </cofactor>
</comment>
<comment type="cofactor">
    <cofactor evidence="1">
        <name>pantetheine 4'-phosphate</name>
        <dbReference type="ChEBI" id="CHEBI:47942"/>
    </cofactor>
    <text evidence="1">Binds 1 phosphopantetheine covalently.</text>
</comment>
<comment type="pathway">
    <text evidence="6 7">Lipid metabolism; fatty acid biosynthesis.</text>
</comment>
<comment type="disruption phenotype">
    <text evidence="6 7">Disruption of the pps gene cluster abolishes the production of both phthiocerol and phenolphthiocerol derivatives (PubMed:9201977). Deletion of the gene abolishes the synthesis of phthiocerol dimycocerosates (DIM) (PubMed:19197369).</text>
</comment>
<gene>
    <name type="primary">ppsE</name>
    <name type="ordered locus">BQ2027_MB2960</name>
</gene>
<organism>
    <name type="scientific">Mycobacterium bovis (strain ATCC BAA-935 / AF2122/97)</name>
    <dbReference type="NCBI Taxonomy" id="233413"/>
    <lineage>
        <taxon>Bacteria</taxon>
        <taxon>Bacillati</taxon>
        <taxon>Actinomycetota</taxon>
        <taxon>Actinomycetes</taxon>
        <taxon>Mycobacteriales</taxon>
        <taxon>Mycobacteriaceae</taxon>
        <taxon>Mycobacterium</taxon>
        <taxon>Mycobacterium tuberculosis complex</taxon>
    </lineage>
</organism>
<protein>
    <recommendedName>
        <fullName evidence="8">Phenolphthiocerol/phthiocerol polyketide synthase subunit E</fullName>
        <ecNumber evidence="2">2.3.1.292</ecNumber>
    </recommendedName>
    <alternativeName>
        <fullName>(Phenol)carboxyphthiodiolenone synthase subunit E</fullName>
    </alternativeName>
    <alternativeName>
        <fullName>Beta-ketoacyl-acyl-carrier-protein synthase I</fullName>
    </alternativeName>
    <alternativeName>
        <fullName>Phthiocerol synthesis polyketide synthase type I PpsE</fullName>
    </alternativeName>
</protein>
<keyword id="KW-0276">Fatty acid metabolism</keyword>
<keyword id="KW-0443">Lipid metabolism</keyword>
<keyword id="KW-0511">Multifunctional enzyme</keyword>
<keyword id="KW-0521">NADP</keyword>
<keyword id="KW-0560">Oxidoreductase</keyword>
<keyword id="KW-0596">Phosphopantetheine</keyword>
<keyword id="KW-0597">Phosphoprotein</keyword>
<keyword id="KW-1185">Reference proteome</keyword>
<keyword id="KW-0808">Transferase</keyword>
<name>PPSE_MYCBO</name>
<proteinExistence type="evidence at protein level"/>
<evidence type="ECO:0000250" key="1"/>
<evidence type="ECO:0000250" key="2">
    <source>
        <dbReference type="UniProtKB" id="P9WQE1"/>
    </source>
</evidence>
<evidence type="ECO:0000255" key="3">
    <source>
        <dbReference type="PROSITE-ProRule" id="PRU00258"/>
    </source>
</evidence>
<evidence type="ECO:0000255" key="4">
    <source>
        <dbReference type="PROSITE-ProRule" id="PRU01348"/>
    </source>
</evidence>
<evidence type="ECO:0000255" key="5">
    <source>
        <dbReference type="PROSITE-ProRule" id="PRU10022"/>
    </source>
</evidence>
<evidence type="ECO:0000269" key="6">
    <source>
    </source>
</evidence>
<evidence type="ECO:0000269" key="7">
    <source>
    </source>
</evidence>
<evidence type="ECO:0000305" key="8"/>
<feature type="chain" id="PRO_0000406951" description="Phenolphthiocerol/phthiocerol polyketide synthase subunit E">
    <location>
        <begin position="1"/>
        <end position="1488"/>
    </location>
</feature>
<feature type="domain" description="Ketosynthase family 3 (KS3)" evidence="4">
    <location>
        <begin position="5"/>
        <end position="438"/>
    </location>
</feature>
<feature type="domain" description="Carrier" evidence="3">
    <location>
        <begin position="930"/>
        <end position="1004"/>
    </location>
</feature>
<feature type="region of interest" description="Acyltransferase" evidence="1">
    <location>
        <begin position="551"/>
        <end position="868"/>
    </location>
</feature>
<feature type="active site" description="For beta-ketoacyl synthase activity" evidence="4">
    <location>
        <position position="184"/>
    </location>
</feature>
<feature type="active site" description="For beta-ketoacyl synthase activity" evidence="4">
    <location>
        <position position="320"/>
    </location>
</feature>
<feature type="active site" description="For beta-ketoacyl synthase activity" evidence="4">
    <location>
        <position position="361"/>
    </location>
</feature>
<feature type="active site" description="For malonyltransferase activity" evidence="5">
    <location>
        <position position="641"/>
    </location>
</feature>
<feature type="binding site" evidence="1">
    <location>
        <begin position="1286"/>
        <end position="1331"/>
    </location>
    <ligand>
        <name>NADP(+)</name>
        <dbReference type="ChEBI" id="CHEBI:58349"/>
    </ligand>
</feature>
<feature type="modified residue" description="O-(pantetheine 4'-phosphoryl)serine" evidence="3">
    <location>
        <position position="965"/>
    </location>
</feature>
<reference key="1">
    <citation type="journal article" date="2003" name="Proc. Natl. Acad. Sci. U.S.A.">
        <title>The complete genome sequence of Mycobacterium bovis.</title>
        <authorList>
            <person name="Garnier T."/>
            <person name="Eiglmeier K."/>
            <person name="Camus J.-C."/>
            <person name="Medina N."/>
            <person name="Mansoor H."/>
            <person name="Pryor M."/>
            <person name="Duthoy S."/>
            <person name="Grondin S."/>
            <person name="Lacroix C."/>
            <person name="Monsempe C."/>
            <person name="Simon S."/>
            <person name="Harris B."/>
            <person name="Atkin R."/>
            <person name="Doggett J."/>
            <person name="Mayes R."/>
            <person name="Keating L."/>
            <person name="Wheeler P.R."/>
            <person name="Parkhill J."/>
            <person name="Barrell B.G."/>
            <person name="Cole S.T."/>
            <person name="Gordon S.V."/>
            <person name="Hewinson R.G."/>
        </authorList>
    </citation>
    <scope>NUCLEOTIDE SEQUENCE [LARGE SCALE GENOMIC DNA]</scope>
    <source>
        <strain>ATCC BAA-935 / AF2122/97</strain>
    </source>
</reference>
<reference key="2">
    <citation type="journal article" date="2017" name="Genome Announc.">
        <title>Updated reference genome sequence and annotation of Mycobacterium bovis AF2122/97.</title>
        <authorList>
            <person name="Malone K.M."/>
            <person name="Farrell D."/>
            <person name="Stuber T.P."/>
            <person name="Schubert O.T."/>
            <person name="Aebersold R."/>
            <person name="Robbe-Austerman S."/>
            <person name="Gordon S.V."/>
        </authorList>
    </citation>
    <scope>NUCLEOTIDE SEQUENCE [LARGE SCALE GENOMIC DNA]</scope>
    <scope>GENOME REANNOTATION</scope>
    <source>
        <strain>ATCC BAA-935 / AF2122/97</strain>
    </source>
</reference>
<reference key="3">
    <citation type="journal article" date="1997" name="J. Biol. Chem.">
        <title>Gene knockout reveals a novel gene cluster for the synthesis of a class of cell wall lipids unique to pathogenic mycobacteria.</title>
        <authorList>
            <person name="Azad A.K."/>
            <person name="Sirakova T.D."/>
            <person name="Fernandes N.D."/>
            <person name="Kolattukudy P.E."/>
        </authorList>
    </citation>
    <scope>FUNCTION IN THE PHTHIOCEROL AND PHENOLPHTHIOCEROL BIOSYNTHESIS</scope>
    <scope>PATHWAY</scope>
    <scope>DISRUPTION PHENOTYPE</scope>
    <source>
        <strain>BCG</strain>
    </source>
</reference>
<reference key="4">
    <citation type="journal article" date="2009" name="PLoS Pathog.">
        <title>Phthiocerol dimycocerosates of M. tuberculosis participate in macrophage invasion by inducing changes in the organization of plasma membrane lipids.</title>
        <authorList>
            <person name="Astarie-Dequeker C."/>
            <person name="Le Guyader L."/>
            <person name="Malaga W."/>
            <person name="Seaphanh F.K."/>
            <person name="Chalut C."/>
            <person name="Lopez A."/>
            <person name="Guilhot C."/>
        </authorList>
    </citation>
    <scope>PATHWAY</scope>
    <scope>DISRUPTION PHENOTYPE</scope>
</reference>
<dbReference type="EC" id="2.3.1.292" evidence="2"/>
<dbReference type="EMBL" id="LT708304">
    <property type="protein sequence ID" value="SIU01581.1"/>
    <property type="molecule type" value="Genomic_DNA"/>
</dbReference>
<dbReference type="RefSeq" id="NP_856605.1">
    <property type="nucleotide sequence ID" value="NC_002945.3"/>
</dbReference>
<dbReference type="RefSeq" id="WP_003904964.1">
    <property type="nucleotide sequence ID" value="NC_002945.4"/>
</dbReference>
<dbReference type="SMR" id="Q7TXL6"/>
<dbReference type="KEGG" id="mbo:BQ2027_MB2960"/>
<dbReference type="PATRIC" id="fig|233413.5.peg.3248"/>
<dbReference type="BioCyc" id="MetaCyc:MONOMER-19630"/>
<dbReference type="UniPathway" id="UPA00094"/>
<dbReference type="Proteomes" id="UP000001419">
    <property type="component" value="Chromosome"/>
</dbReference>
<dbReference type="GO" id="GO:0005886">
    <property type="term" value="C:plasma membrane"/>
    <property type="evidence" value="ECO:0007669"/>
    <property type="project" value="TreeGrafter"/>
</dbReference>
<dbReference type="GO" id="GO:0034081">
    <property type="term" value="C:polyketide synthase complex"/>
    <property type="evidence" value="ECO:0000315"/>
    <property type="project" value="UniProtKB"/>
</dbReference>
<dbReference type="GO" id="GO:0004315">
    <property type="term" value="F:3-oxoacyl-[acyl-carrier-protein] synthase activity"/>
    <property type="evidence" value="ECO:0007669"/>
    <property type="project" value="InterPro"/>
</dbReference>
<dbReference type="GO" id="GO:0004312">
    <property type="term" value="F:fatty acid synthase activity"/>
    <property type="evidence" value="ECO:0007669"/>
    <property type="project" value="TreeGrafter"/>
</dbReference>
<dbReference type="GO" id="GO:0016491">
    <property type="term" value="F:oxidoreductase activity"/>
    <property type="evidence" value="ECO:0007669"/>
    <property type="project" value="UniProtKB-KW"/>
</dbReference>
<dbReference type="GO" id="GO:0031177">
    <property type="term" value="F:phosphopantetheine binding"/>
    <property type="evidence" value="ECO:0007669"/>
    <property type="project" value="InterPro"/>
</dbReference>
<dbReference type="GO" id="GO:0071766">
    <property type="term" value="P:Actinobacterium-type cell wall biogenesis"/>
    <property type="evidence" value="ECO:0000315"/>
    <property type="project" value="UniProtKB"/>
</dbReference>
<dbReference type="GO" id="GO:0071770">
    <property type="term" value="P:DIM/DIP cell wall layer assembly"/>
    <property type="evidence" value="ECO:0007669"/>
    <property type="project" value="TreeGrafter"/>
</dbReference>
<dbReference type="GO" id="GO:0006633">
    <property type="term" value="P:fatty acid biosynthetic process"/>
    <property type="evidence" value="ECO:0007669"/>
    <property type="project" value="UniProtKB-UniPathway"/>
</dbReference>
<dbReference type="GO" id="GO:0008610">
    <property type="term" value="P:lipid biosynthetic process"/>
    <property type="evidence" value="ECO:0000315"/>
    <property type="project" value="UniProtKB"/>
</dbReference>
<dbReference type="CDD" id="cd00833">
    <property type="entry name" value="PKS"/>
    <property type="match status" value="1"/>
</dbReference>
<dbReference type="FunFam" id="1.10.1200.10:FF:000005">
    <property type="entry name" value="Nonribosomal peptide synthetase 1"/>
    <property type="match status" value="1"/>
</dbReference>
<dbReference type="FunFam" id="3.40.47.10:FF:000042">
    <property type="entry name" value="Polyketide synthase Pks13"/>
    <property type="match status" value="1"/>
</dbReference>
<dbReference type="Gene3D" id="3.30.70.3290">
    <property type="match status" value="1"/>
</dbReference>
<dbReference type="Gene3D" id="3.40.47.10">
    <property type="match status" value="1"/>
</dbReference>
<dbReference type="Gene3D" id="1.10.1200.10">
    <property type="entry name" value="ACP-like"/>
    <property type="match status" value="1"/>
</dbReference>
<dbReference type="Gene3D" id="3.30.559.10">
    <property type="entry name" value="Chloramphenicol acetyltransferase-like domain"/>
    <property type="match status" value="1"/>
</dbReference>
<dbReference type="Gene3D" id="3.40.366.10">
    <property type="entry name" value="Malonyl-Coenzyme A Acyl Carrier Protein, domain 2"/>
    <property type="match status" value="1"/>
</dbReference>
<dbReference type="Gene3D" id="3.30.559.30">
    <property type="entry name" value="Nonribosomal peptide synthetase, condensation domain"/>
    <property type="match status" value="1"/>
</dbReference>
<dbReference type="InterPro" id="IPR001227">
    <property type="entry name" value="Ac_transferase_dom_sf"/>
</dbReference>
<dbReference type="InterPro" id="IPR036736">
    <property type="entry name" value="ACP-like_sf"/>
</dbReference>
<dbReference type="InterPro" id="IPR014043">
    <property type="entry name" value="Acyl_transferase_dom"/>
</dbReference>
<dbReference type="InterPro" id="IPR016035">
    <property type="entry name" value="Acyl_Trfase/lysoPLipase"/>
</dbReference>
<dbReference type="InterPro" id="IPR023213">
    <property type="entry name" value="CAT-like_dom_sf"/>
</dbReference>
<dbReference type="InterPro" id="IPR001242">
    <property type="entry name" value="Condensatn"/>
</dbReference>
<dbReference type="InterPro" id="IPR018201">
    <property type="entry name" value="Ketoacyl_synth_AS"/>
</dbReference>
<dbReference type="InterPro" id="IPR014031">
    <property type="entry name" value="Ketoacyl_synth_C"/>
</dbReference>
<dbReference type="InterPro" id="IPR014030">
    <property type="entry name" value="Ketoacyl_synth_N"/>
</dbReference>
<dbReference type="InterPro" id="IPR016036">
    <property type="entry name" value="Malonyl_transacylase_ACP-bd"/>
</dbReference>
<dbReference type="InterPro" id="IPR032821">
    <property type="entry name" value="PKS_assoc"/>
</dbReference>
<dbReference type="InterPro" id="IPR020841">
    <property type="entry name" value="PKS_Beta-ketoAc_synthase_dom"/>
</dbReference>
<dbReference type="InterPro" id="IPR050091">
    <property type="entry name" value="PKS_NRPS_Biosynth_Enz"/>
</dbReference>
<dbReference type="InterPro" id="IPR020806">
    <property type="entry name" value="PKS_PP-bd"/>
</dbReference>
<dbReference type="InterPro" id="IPR009081">
    <property type="entry name" value="PP-bd_ACP"/>
</dbReference>
<dbReference type="InterPro" id="IPR016039">
    <property type="entry name" value="Thiolase-like"/>
</dbReference>
<dbReference type="PANTHER" id="PTHR43775">
    <property type="entry name" value="FATTY ACID SYNTHASE"/>
    <property type="match status" value="1"/>
</dbReference>
<dbReference type="PANTHER" id="PTHR43775:SF37">
    <property type="entry name" value="SI:DKEY-61P9.11"/>
    <property type="match status" value="1"/>
</dbReference>
<dbReference type="Pfam" id="PF00698">
    <property type="entry name" value="Acyl_transf_1"/>
    <property type="match status" value="1"/>
</dbReference>
<dbReference type="Pfam" id="PF00668">
    <property type="entry name" value="Condensation"/>
    <property type="match status" value="1"/>
</dbReference>
<dbReference type="Pfam" id="PF16197">
    <property type="entry name" value="KAsynt_C_assoc"/>
    <property type="match status" value="1"/>
</dbReference>
<dbReference type="Pfam" id="PF00109">
    <property type="entry name" value="ketoacyl-synt"/>
    <property type="match status" value="1"/>
</dbReference>
<dbReference type="Pfam" id="PF02801">
    <property type="entry name" value="Ketoacyl-synt_C"/>
    <property type="match status" value="1"/>
</dbReference>
<dbReference type="Pfam" id="PF00550">
    <property type="entry name" value="PP-binding"/>
    <property type="match status" value="1"/>
</dbReference>
<dbReference type="SMART" id="SM00827">
    <property type="entry name" value="PKS_AT"/>
    <property type="match status" value="1"/>
</dbReference>
<dbReference type="SMART" id="SM00825">
    <property type="entry name" value="PKS_KS"/>
    <property type="match status" value="1"/>
</dbReference>
<dbReference type="SMART" id="SM00823">
    <property type="entry name" value="PKS_PP"/>
    <property type="match status" value="1"/>
</dbReference>
<dbReference type="SUPFAM" id="SSF47336">
    <property type="entry name" value="ACP-like"/>
    <property type="match status" value="1"/>
</dbReference>
<dbReference type="SUPFAM" id="SSF52777">
    <property type="entry name" value="CoA-dependent acyltransferases"/>
    <property type="match status" value="2"/>
</dbReference>
<dbReference type="SUPFAM" id="SSF52151">
    <property type="entry name" value="FabD/lysophospholipase-like"/>
    <property type="match status" value="1"/>
</dbReference>
<dbReference type="SUPFAM" id="SSF55048">
    <property type="entry name" value="Probable ACP-binding domain of malonyl-CoA ACP transacylase"/>
    <property type="match status" value="1"/>
</dbReference>
<dbReference type="SUPFAM" id="SSF53901">
    <property type="entry name" value="Thiolase-like"/>
    <property type="match status" value="1"/>
</dbReference>
<dbReference type="PROSITE" id="PS50075">
    <property type="entry name" value="CARRIER"/>
    <property type="match status" value="1"/>
</dbReference>
<dbReference type="PROSITE" id="PS00606">
    <property type="entry name" value="KS3_1"/>
    <property type="match status" value="1"/>
</dbReference>
<dbReference type="PROSITE" id="PS52004">
    <property type="entry name" value="KS3_2"/>
    <property type="match status" value="1"/>
</dbReference>
<sequence>MSIPENAIAVVGMAGRFPGAKDVSAFWSNLRRGKESIVTLSEQELRDAGVSDKTLADPAYVRRAPLLDGIDEFDAGFFGFPPLAAQVLDPQHRLFLQCAWHALEDAGADPARFDGSIGVYGTSSPSGYLLHNLLSHRDPNAVLAEGLNFDQFSLFLQNDKDFLATRISHAFNLRGPSIAVQTACSSSLVAVHLACLSLLSGECDMALAGGSSLCIPHRVGYFTSPGSMVSAVGHCRPFDVRADGTVFGSGVGLVVLKPLAAAIDAGDRIHAVIRGSAINNDGSAKMGYAAPNPAAQADVIAEAHAVSGIDSSTVSYVECHGTGTPLGDPIEIQGLRAAFEVSQTSRSAPCVLGSVKSNIGHLEVAAGIAGLIKTILCLKNKALPATLHYTSPNPELRLDQSPFVVQSKYGPWECDGVRRAGVSSFGVGGTNAHVVLEEAPAEASEVSAHAEPAGPQVILLSAQTAAALGESRTALAAALETQDGPRLSDVAYTLARRRKHNVTMAAVVHDREHAATVLRAAEHDNVFVGEAAHDGEHGDRADAAPTSDRVVFLFPGQGAQHVGMAKGLYDTEPVFAQHFDTCAAGFRDETGIDLHAEVFDGTATDLERIDRSQPALFTVEYALAKLVDTFGVRAGAYIGYSTGEYIAATLAGVFDLQTAIKTVSLRARLMHESPPGAMVAVALGPDDVTQYLPPEVELSAVNDPGNCVVAGPKDQIRALRQRLTEAGIPVRRVRATHAFHTSAMDPMLGQFQEFLSRQQLRPPRTPLLSNLTGSWMSDQQVVDPASWTRQISSPIRFADELDVVLAAPSRILVEVGPGGSLTGSAMRHPKWSTTHRTVRLMRHPLQDVDDRDTFLRALGELWSAGVEVDWTPRRPAVPHLVSLPGYPFARQRHWVEPNHTVWAQAPGANNGSPAGTADGSTAATVDAARNGESQTEVTLQRIWSQCLGVSSVDRNANFFDLGGDSLMAISIAMAAANEGLTITPQDLYEYPTLASLTAAVDASFASSGLAKPPEAQANPAVPPNVTYFLDRGLRDTGRCRVPLILRLDPKIGLPDIRAVLTAVVNHHDALRLHLVGNDGIWEQHIAAPAEFTGLSNRSVPDGVAAGSPEERAAVLGILAELLEDQTDPNAPLAAVHIAAAHGGPHYLCLAIHAMVTDDSSRQILATDIVTAFGQRLAGEEITLEPVSTGWREWSLRCAALATHPAALDTRSYWIENSTKATLWLADALPNAHTAHPPRADELTKLSSTLSVEQTSELDDGRRRFRRSIQTILLAALGRTIAQTVGEGVVAVELEGEGRSVLRPDVDLRRTVGWFTTYYPVPLACATGLGALAQLDAVHNTLKSVPHYGIGYGLLRYVYAPTGRVLGAQRTPDIHFRYAGVIPELPSGDAPVQFDSDMTLPVREPIPGMGHAIELRVYRFGGSLHLDWWYDTRRIPAATAEALERTFPLALSALIQEAIAAEHTEHDDSEIVGEPEAGALVDLSSMDAG</sequence>
<accession>Q7TXL6</accession>
<accession>A0A1R3Y2M9</accession>
<accession>X2BLX7</accession>